<organism>
    <name type="scientific">Mus musculus</name>
    <name type="common">Mouse</name>
    <dbReference type="NCBI Taxonomy" id="10090"/>
    <lineage>
        <taxon>Eukaryota</taxon>
        <taxon>Metazoa</taxon>
        <taxon>Chordata</taxon>
        <taxon>Craniata</taxon>
        <taxon>Vertebrata</taxon>
        <taxon>Euteleostomi</taxon>
        <taxon>Mammalia</taxon>
        <taxon>Eutheria</taxon>
        <taxon>Euarchontoglires</taxon>
        <taxon>Glires</taxon>
        <taxon>Rodentia</taxon>
        <taxon>Myomorpha</taxon>
        <taxon>Muroidea</taxon>
        <taxon>Muridae</taxon>
        <taxon>Murinae</taxon>
        <taxon>Mus</taxon>
        <taxon>Mus</taxon>
    </lineage>
</organism>
<comment type="function">
    <text evidence="5">Calcium-independent, swelling-dependent volume-regulated anion channel (VRAC-swell) which plays a pivotal role in the process of regulatory volume decrease (RVD) in the brain through the efflux of anions like chloride and organic osmolytes like glutamate.</text>
</comment>
<comment type="catalytic activity">
    <reaction evidence="5">
        <text>chloride(in) = chloride(out)</text>
        <dbReference type="Rhea" id="RHEA:29823"/>
        <dbReference type="ChEBI" id="CHEBI:17996"/>
    </reaction>
</comment>
<comment type="catalytic activity">
    <reaction evidence="5">
        <text>L-glutamate(out) = L-glutamate(in)</text>
        <dbReference type="Rhea" id="RHEA:66336"/>
        <dbReference type="ChEBI" id="CHEBI:29985"/>
    </reaction>
    <physiologicalReaction direction="right-to-left" evidence="12">
        <dbReference type="Rhea" id="RHEA:66338"/>
    </physiologicalReaction>
</comment>
<comment type="activity regulation">
    <text evidence="5">Inhibited by (4-[(2-butyl-6,7-dichloro-2- cyclopentyl-2,3-dihydro-1-oxo-1H-inden-5-yl)oxy]butanoic acid).</text>
</comment>
<comment type="subunit">
    <text evidence="1 6">Homotetramer; disulfide-linked (PubMed:36042377). Homodimer (By similarity).</text>
</comment>
<comment type="subcellular location">
    <subcellularLocation>
        <location evidence="5 6">Cell membrane</location>
        <topology evidence="2">Multi-pass membrane protein</topology>
    </subcellularLocation>
</comment>
<comment type="alternative products">
    <event type="alternative splicing"/>
    <isoform>
        <id>Q9D3A9-1</id>
        <name>1</name>
        <sequence type="displayed"/>
    </isoform>
    <isoform>
        <id>Q9D3A9-4</id>
        <name>4</name>
        <sequence type="described" ref="VSP_029765"/>
    </isoform>
    <isoform>
        <id>Q9D3A9-5</id>
        <name>5</name>
        <sequence type="described" ref="VSP_029762 VSP_029763"/>
    </isoform>
</comment>
<comment type="tissue specificity">
    <text evidence="4 5">Expressed in the astrocytes (at protein level) (PubMed:31138989). Restricted mainly to neural tissues. Strongly expressed in brain and eye.</text>
</comment>
<comment type="PTM">
    <text evidence="1">N-glycosylated. Contains high-mannose, hybrid and complex oligosaccharides.</text>
</comment>
<comment type="similarity">
    <text evidence="11">Belongs to the tweety family.</text>
</comment>
<comment type="caution">
    <text evidence="5">According to PubMed:31138989 the fifth transmembrane domain is an intramembrane domain and both the N-terminus and C-terminus are in the cytosol.</text>
</comment>
<comment type="sequence caution" evidence="11">
    <conflict type="miscellaneous discrepancy">
        <sequence resource="EMBL-CDS" id="AAG15842"/>
    </conflict>
    <text>Aberrant splicing.</text>
</comment>
<comment type="sequence caution" evidence="11">
    <molecule>Isoform 4</molecule>
    <conflict type="frameshift">
        <sequence resource="EMBL-CDS" id="BAD20188"/>
    </conflict>
</comment>
<reference key="1">
    <citation type="journal article" date="2000" name="Genomics">
        <title>Human and mouse homologues of the Drosophila melanogaster tweety (tty) gene: a novel gene family encoding predicted transmembrane proteins.</title>
        <authorList>
            <person name="Campbell H.D."/>
            <person name="Kamei M."/>
            <person name="Claudianos C."/>
            <person name="Woollatt E."/>
            <person name="Sutherland G.R."/>
            <person name="Suzuki Y."/>
            <person name="Hida M."/>
            <person name="Sugano S."/>
            <person name="Young I.G."/>
        </authorList>
    </citation>
    <scope>NUCLEOTIDE SEQUENCE [GENOMIC DNA / MRNA] (ISOFORM 1)</scope>
    <source>
        <strain>BALB/cJ</strain>
    </source>
</reference>
<reference key="2">
    <citation type="journal article" date="2004" name="J. Biol. Chem.">
        <title>A novel human Cl(-) channel family related to Drosophila flightless locus.</title>
        <authorList>
            <person name="Suzuki M."/>
            <person name="Mizuno A."/>
        </authorList>
    </citation>
    <scope>NUCLEOTIDE SEQUENCE [MRNA] (ISOFORM 4)</scope>
    <source>
        <strain>C57BL/6J</strain>
        <tissue>Brain</tissue>
    </source>
</reference>
<reference key="3">
    <citation type="journal article" date="2005" name="Science">
        <title>The transcriptional landscape of the mammalian genome.</title>
        <authorList>
            <person name="Carninci P."/>
            <person name="Kasukawa T."/>
            <person name="Katayama S."/>
            <person name="Gough J."/>
            <person name="Frith M.C."/>
            <person name="Maeda N."/>
            <person name="Oyama R."/>
            <person name="Ravasi T."/>
            <person name="Lenhard B."/>
            <person name="Wells C."/>
            <person name="Kodzius R."/>
            <person name="Shimokawa K."/>
            <person name="Bajic V.B."/>
            <person name="Brenner S.E."/>
            <person name="Batalov S."/>
            <person name="Forrest A.R."/>
            <person name="Zavolan M."/>
            <person name="Davis M.J."/>
            <person name="Wilming L.G."/>
            <person name="Aidinis V."/>
            <person name="Allen J.E."/>
            <person name="Ambesi-Impiombato A."/>
            <person name="Apweiler R."/>
            <person name="Aturaliya R.N."/>
            <person name="Bailey T.L."/>
            <person name="Bansal M."/>
            <person name="Baxter L."/>
            <person name="Beisel K.W."/>
            <person name="Bersano T."/>
            <person name="Bono H."/>
            <person name="Chalk A.M."/>
            <person name="Chiu K.P."/>
            <person name="Choudhary V."/>
            <person name="Christoffels A."/>
            <person name="Clutterbuck D.R."/>
            <person name="Crowe M.L."/>
            <person name="Dalla E."/>
            <person name="Dalrymple B.P."/>
            <person name="de Bono B."/>
            <person name="Della Gatta G."/>
            <person name="di Bernardo D."/>
            <person name="Down T."/>
            <person name="Engstrom P."/>
            <person name="Fagiolini M."/>
            <person name="Faulkner G."/>
            <person name="Fletcher C.F."/>
            <person name="Fukushima T."/>
            <person name="Furuno M."/>
            <person name="Futaki S."/>
            <person name="Gariboldi M."/>
            <person name="Georgii-Hemming P."/>
            <person name="Gingeras T.R."/>
            <person name="Gojobori T."/>
            <person name="Green R.E."/>
            <person name="Gustincich S."/>
            <person name="Harbers M."/>
            <person name="Hayashi Y."/>
            <person name="Hensch T.K."/>
            <person name="Hirokawa N."/>
            <person name="Hill D."/>
            <person name="Huminiecki L."/>
            <person name="Iacono M."/>
            <person name="Ikeo K."/>
            <person name="Iwama A."/>
            <person name="Ishikawa T."/>
            <person name="Jakt M."/>
            <person name="Kanapin A."/>
            <person name="Katoh M."/>
            <person name="Kawasawa Y."/>
            <person name="Kelso J."/>
            <person name="Kitamura H."/>
            <person name="Kitano H."/>
            <person name="Kollias G."/>
            <person name="Krishnan S.P."/>
            <person name="Kruger A."/>
            <person name="Kummerfeld S.K."/>
            <person name="Kurochkin I.V."/>
            <person name="Lareau L.F."/>
            <person name="Lazarevic D."/>
            <person name="Lipovich L."/>
            <person name="Liu J."/>
            <person name="Liuni S."/>
            <person name="McWilliam S."/>
            <person name="Madan Babu M."/>
            <person name="Madera M."/>
            <person name="Marchionni L."/>
            <person name="Matsuda H."/>
            <person name="Matsuzawa S."/>
            <person name="Miki H."/>
            <person name="Mignone F."/>
            <person name="Miyake S."/>
            <person name="Morris K."/>
            <person name="Mottagui-Tabar S."/>
            <person name="Mulder N."/>
            <person name="Nakano N."/>
            <person name="Nakauchi H."/>
            <person name="Ng P."/>
            <person name="Nilsson R."/>
            <person name="Nishiguchi S."/>
            <person name="Nishikawa S."/>
            <person name="Nori F."/>
            <person name="Ohara O."/>
            <person name="Okazaki Y."/>
            <person name="Orlando V."/>
            <person name="Pang K.C."/>
            <person name="Pavan W.J."/>
            <person name="Pavesi G."/>
            <person name="Pesole G."/>
            <person name="Petrovsky N."/>
            <person name="Piazza S."/>
            <person name="Reed J."/>
            <person name="Reid J.F."/>
            <person name="Ring B.Z."/>
            <person name="Ringwald M."/>
            <person name="Rost B."/>
            <person name="Ruan Y."/>
            <person name="Salzberg S.L."/>
            <person name="Sandelin A."/>
            <person name="Schneider C."/>
            <person name="Schoenbach C."/>
            <person name="Sekiguchi K."/>
            <person name="Semple C.A."/>
            <person name="Seno S."/>
            <person name="Sessa L."/>
            <person name="Sheng Y."/>
            <person name="Shibata Y."/>
            <person name="Shimada H."/>
            <person name="Shimada K."/>
            <person name="Silva D."/>
            <person name="Sinclair B."/>
            <person name="Sperling S."/>
            <person name="Stupka E."/>
            <person name="Sugiura K."/>
            <person name="Sultana R."/>
            <person name="Takenaka Y."/>
            <person name="Taki K."/>
            <person name="Tammoja K."/>
            <person name="Tan S.L."/>
            <person name="Tang S."/>
            <person name="Taylor M.S."/>
            <person name="Tegner J."/>
            <person name="Teichmann S.A."/>
            <person name="Ueda H.R."/>
            <person name="van Nimwegen E."/>
            <person name="Verardo R."/>
            <person name="Wei C.L."/>
            <person name="Yagi K."/>
            <person name="Yamanishi H."/>
            <person name="Zabarovsky E."/>
            <person name="Zhu S."/>
            <person name="Zimmer A."/>
            <person name="Hide W."/>
            <person name="Bult C."/>
            <person name="Grimmond S.M."/>
            <person name="Teasdale R.D."/>
            <person name="Liu E.T."/>
            <person name="Brusic V."/>
            <person name="Quackenbush J."/>
            <person name="Wahlestedt C."/>
            <person name="Mattick J.S."/>
            <person name="Hume D.A."/>
            <person name="Kai C."/>
            <person name="Sasaki D."/>
            <person name="Tomaru Y."/>
            <person name="Fukuda S."/>
            <person name="Kanamori-Katayama M."/>
            <person name="Suzuki M."/>
            <person name="Aoki J."/>
            <person name="Arakawa T."/>
            <person name="Iida J."/>
            <person name="Imamura K."/>
            <person name="Itoh M."/>
            <person name="Kato T."/>
            <person name="Kawaji H."/>
            <person name="Kawagashira N."/>
            <person name="Kawashima T."/>
            <person name="Kojima M."/>
            <person name="Kondo S."/>
            <person name="Konno H."/>
            <person name="Nakano K."/>
            <person name="Ninomiya N."/>
            <person name="Nishio T."/>
            <person name="Okada M."/>
            <person name="Plessy C."/>
            <person name="Shibata K."/>
            <person name="Shiraki T."/>
            <person name="Suzuki S."/>
            <person name="Tagami M."/>
            <person name="Waki K."/>
            <person name="Watahiki A."/>
            <person name="Okamura-Oho Y."/>
            <person name="Suzuki H."/>
            <person name="Kawai J."/>
            <person name="Hayashizaki Y."/>
        </authorList>
    </citation>
    <scope>NUCLEOTIDE SEQUENCE [LARGE SCALE MRNA] (ISOFORMS 1 AND 5)</scope>
    <source>
        <strain>C57BL/6J</strain>
        <tissue>Brain cortex</tissue>
        <tissue>Head</tissue>
        <tissue>Hippocampus</tissue>
        <tissue>Medulla oblongata</tissue>
        <tissue>Testis</tissue>
    </source>
</reference>
<reference key="4">
    <citation type="journal article" date="2004" name="Genome Res.">
        <title>The status, quality, and expansion of the NIH full-length cDNA project: the Mammalian Gene Collection (MGC).</title>
        <authorList>
            <consortium name="The MGC Project Team"/>
        </authorList>
    </citation>
    <scope>NUCLEOTIDE SEQUENCE [LARGE SCALE MRNA] (ISOFORMS 1 AND 4)</scope>
    <source>
        <strain>C57BL/6J</strain>
        <tissue>Brain</tissue>
        <tissue>Olfactory epithelium</tissue>
    </source>
</reference>
<reference key="5">
    <citation type="journal article" date="2007" name="J. Neurochem.">
        <title>Expression and evolution of the mammalian brain gene Ttyh1.</title>
        <authorList>
            <person name="Matthews C.A."/>
            <person name="Shaw J.E."/>
            <person name="Hooper J.A."/>
            <person name="Young I.G."/>
            <person name="Crouch M.F."/>
            <person name="Campbell H.D."/>
        </authorList>
    </citation>
    <scope>TISSUE SPECIFICITY</scope>
</reference>
<reference key="6">
    <citation type="journal article" date="2007" name="Mol. Cell. Proteomics">
        <title>Qualitative and quantitative analyses of protein phosphorylation in naive and stimulated mouse synaptosomal preparations.</title>
        <authorList>
            <person name="Munton R.P."/>
            <person name="Tweedie-Cullen R."/>
            <person name="Livingstone-Zatchej M."/>
            <person name="Weinandy F."/>
            <person name="Waidelich M."/>
            <person name="Longo D."/>
            <person name="Gehrig P."/>
            <person name="Potthast F."/>
            <person name="Rutishauser D."/>
            <person name="Gerrits B."/>
            <person name="Panse C."/>
            <person name="Schlapbach R."/>
            <person name="Mansuy I.M."/>
        </authorList>
    </citation>
    <scope>IDENTIFICATION BY MASS SPECTROMETRY [LARGE SCALE ANALYSIS]</scope>
    <source>
        <tissue>Brain cortex</tissue>
    </source>
</reference>
<reference key="7">
    <citation type="journal article" date="2010" name="Cell">
        <title>A tissue-specific atlas of mouse protein phosphorylation and expression.</title>
        <authorList>
            <person name="Huttlin E.L."/>
            <person name="Jedrychowski M.P."/>
            <person name="Elias J.E."/>
            <person name="Goswami T."/>
            <person name="Rad R."/>
            <person name="Beausoleil S.A."/>
            <person name="Villen J."/>
            <person name="Haas W."/>
            <person name="Sowa M.E."/>
            <person name="Gygi S.P."/>
        </authorList>
    </citation>
    <scope>PHOSPHORYLATION [LARGE SCALE ANALYSIS] AT SER-440</scope>
    <scope>IDENTIFICATION BY MASS SPECTROMETRY [LARGE SCALE ANALYSIS]</scope>
    <source>
        <tissue>Brain</tissue>
    </source>
</reference>
<reference key="8">
    <citation type="journal article" date="2019" name="Exp. Neurobiol.">
        <title>Tweety-homolog (Ttyh) Family Encodes the Pore-forming Subunits of the Swelling-dependent Volume-regulated Anion Channel (VRACswell) in the Brain.</title>
        <authorList>
            <person name="Han Y.E."/>
            <person name="Kwon J."/>
            <person name="Won J."/>
            <person name="An H."/>
            <person name="Jang M.W."/>
            <person name="Woo J."/>
            <person name="Lee J.S."/>
            <person name="Park M.G."/>
            <person name="Yoon B.E."/>
            <person name="Lee S.E."/>
            <person name="Hwang E.M."/>
            <person name="Jung J.Y."/>
            <person name="Park H."/>
            <person name="Oh S.J."/>
            <person name="Lee C.J."/>
        </authorList>
    </citation>
    <scope>FUNCTION</scope>
    <scope>TRANSPORTER ACTIVITY</scope>
    <scope>SUBCELLULAR LOCATION</scope>
    <scope>ACTIVITY REGULATION</scope>
    <scope>MUTAGENESIS OF ARG-165</scope>
    <scope>SITE</scope>
    <scope>TISSUE SPECIFICITY</scope>
    <scope>CAUTION</scope>
</reference>
<reference key="9">
    <citation type="journal article" date="2022" name="Commun. Biol.">
        <title>TTYH family members form tetrameric complexes at the cell membrane.</title>
        <authorList>
            <person name="Melvin E."/>
            <person name="Kalaninova Z."/>
            <person name="Shlush E."/>
            <person name="Man P."/>
            <person name="Giladi M."/>
            <person name="Haitin Y."/>
        </authorList>
    </citation>
    <scope>SUBUNIT</scope>
    <scope>SUBCELLULAR LOCATION</scope>
    <scope>DISULFIDE BOND</scope>
</reference>
<dbReference type="EMBL" id="AF190991">
    <property type="protein sequence ID" value="AAG15842.1"/>
    <property type="status" value="ALT_SEQ"/>
    <property type="molecule type" value="mRNA"/>
</dbReference>
<dbReference type="EMBL" id="AF190699">
    <property type="protein sequence ID" value="AAG02615.1"/>
    <property type="molecule type" value="mRNA"/>
</dbReference>
<dbReference type="EMBL" id="DQ104403">
    <property type="protein sequence ID" value="AAZ06803.1"/>
    <property type="molecule type" value="Genomic_DNA"/>
</dbReference>
<dbReference type="EMBL" id="AB162929">
    <property type="protein sequence ID" value="BAD20188.1"/>
    <property type="status" value="ALT_FRAME"/>
    <property type="molecule type" value="mRNA"/>
</dbReference>
<dbReference type="EMBL" id="AK015486">
    <property type="protein sequence ID" value="BAB29865.1"/>
    <property type="molecule type" value="mRNA"/>
</dbReference>
<dbReference type="EMBL" id="AK018148">
    <property type="protein sequence ID" value="BAB31094.1"/>
    <property type="molecule type" value="mRNA"/>
</dbReference>
<dbReference type="EMBL" id="AK043998">
    <property type="protein sequence ID" value="BAC31730.1"/>
    <property type="molecule type" value="mRNA"/>
</dbReference>
<dbReference type="EMBL" id="AK048413">
    <property type="protein sequence ID" value="BAC33329.1"/>
    <property type="molecule type" value="mRNA"/>
</dbReference>
<dbReference type="EMBL" id="AK049903">
    <property type="protein sequence ID" value="BAC33980.1"/>
    <property type="molecule type" value="mRNA"/>
</dbReference>
<dbReference type="EMBL" id="BC046310">
    <property type="protein sequence ID" value="AAH46310.1"/>
    <property type="molecule type" value="mRNA"/>
</dbReference>
<dbReference type="EMBL" id="BC065694">
    <property type="protein sequence ID" value="AAH65694.1"/>
    <property type="molecule type" value="mRNA"/>
</dbReference>
<dbReference type="CCDS" id="CCDS20730.1">
    <molecule id="Q9D3A9-1"/>
</dbReference>
<dbReference type="CCDS" id="CCDS51970.1">
    <molecule id="Q9D3A9-4"/>
</dbReference>
<dbReference type="RefSeq" id="NP_001001454.2">
    <molecule id="Q9D3A9-4"/>
    <property type="nucleotide sequence ID" value="NM_001001454.4"/>
</dbReference>
<dbReference type="RefSeq" id="NP_001103235.1">
    <molecule id="Q9D3A9-1"/>
    <property type="nucleotide sequence ID" value="NM_001109765.2"/>
</dbReference>
<dbReference type="RefSeq" id="NP_001292751.1">
    <property type="nucleotide sequence ID" value="NM_001305822.1"/>
</dbReference>
<dbReference type="RefSeq" id="NP_067299.2">
    <molecule id="Q9D3A9-1"/>
    <property type="nucleotide sequence ID" value="NM_021324.6"/>
</dbReference>
<dbReference type="SMR" id="Q9D3A9"/>
<dbReference type="BioGRID" id="208324">
    <property type="interactions" value="2"/>
</dbReference>
<dbReference type="FunCoup" id="Q9D3A9">
    <property type="interactions" value="589"/>
</dbReference>
<dbReference type="STRING" id="10090.ENSMUSP00000078384"/>
<dbReference type="ChEMBL" id="CHEMBL4739703"/>
<dbReference type="GlyCosmos" id="Q9D3A9">
    <property type="glycosylation" value="3 sites, No reported glycans"/>
</dbReference>
<dbReference type="GlyGen" id="Q9D3A9">
    <property type="glycosylation" value="3 sites, 1 N-linked glycan (1 site)"/>
</dbReference>
<dbReference type="iPTMnet" id="Q9D3A9"/>
<dbReference type="PhosphoSitePlus" id="Q9D3A9"/>
<dbReference type="SwissPalm" id="Q9D3A9"/>
<dbReference type="PaxDb" id="10090-ENSMUSP00000078384"/>
<dbReference type="PeptideAtlas" id="Q9D3A9"/>
<dbReference type="ProteomicsDB" id="300053">
    <molecule id="Q9D3A9-1"/>
</dbReference>
<dbReference type="ProteomicsDB" id="300054">
    <molecule id="Q9D3A9-4"/>
</dbReference>
<dbReference type="ProteomicsDB" id="300055">
    <molecule id="Q9D3A9-5"/>
</dbReference>
<dbReference type="Antibodypedia" id="32911">
    <property type="antibodies" value="171 antibodies from 24 providers"/>
</dbReference>
<dbReference type="DNASU" id="57776"/>
<dbReference type="Ensembl" id="ENSMUST00000079415.12">
    <molecule id="Q9D3A9-4"/>
    <property type="protein sequence ID" value="ENSMUSP00000078384.6"/>
    <property type="gene ID" value="ENSMUSG00000030428.17"/>
</dbReference>
<dbReference type="Ensembl" id="ENSMUST00000119661.8">
    <molecule id="Q9D3A9-1"/>
    <property type="protein sequence ID" value="ENSMUSP00000113937.2"/>
    <property type="gene ID" value="ENSMUSG00000030428.17"/>
</dbReference>
<dbReference type="Ensembl" id="ENSMUST00000129423.8">
    <molecule id="Q9D3A9-1"/>
    <property type="protein sequence ID" value="ENSMUSP00000120182.2"/>
    <property type="gene ID" value="ENSMUSG00000030428.17"/>
</dbReference>
<dbReference type="GeneID" id="57776"/>
<dbReference type="KEGG" id="mmu:57776"/>
<dbReference type="UCSC" id="uc009eww.3">
    <molecule id="Q9D3A9-1"/>
    <property type="organism name" value="mouse"/>
</dbReference>
<dbReference type="UCSC" id="uc012ewq.2">
    <molecule id="Q9D3A9-4"/>
    <property type="organism name" value="mouse"/>
</dbReference>
<dbReference type="AGR" id="MGI:1889007"/>
<dbReference type="CTD" id="57348"/>
<dbReference type="MGI" id="MGI:1889007">
    <property type="gene designation" value="Ttyh1"/>
</dbReference>
<dbReference type="VEuPathDB" id="HostDB:ENSMUSG00000030428"/>
<dbReference type="eggNOG" id="KOG4433">
    <property type="taxonomic scope" value="Eukaryota"/>
</dbReference>
<dbReference type="GeneTree" id="ENSGT00950000183060"/>
<dbReference type="HOGENOM" id="CLU_023758_1_0_1"/>
<dbReference type="InParanoid" id="Q9D3A9"/>
<dbReference type="OMA" id="DFCSEPN"/>
<dbReference type="OrthoDB" id="76667at9989"/>
<dbReference type="PhylomeDB" id="Q9D3A9"/>
<dbReference type="TreeFam" id="TF319025"/>
<dbReference type="Reactome" id="R-MMU-2672351">
    <property type="pathway name" value="Stimuli-sensing channels"/>
</dbReference>
<dbReference type="BioGRID-ORCS" id="57776">
    <property type="hits" value="2 hits in 58 CRISPR screens"/>
</dbReference>
<dbReference type="ChiTaRS" id="Ttyh1">
    <property type="organism name" value="mouse"/>
</dbReference>
<dbReference type="PRO" id="PR:Q9D3A9"/>
<dbReference type="Proteomes" id="UP000000589">
    <property type="component" value="Chromosome 7"/>
</dbReference>
<dbReference type="RNAct" id="Q9D3A9">
    <property type="molecule type" value="protein"/>
</dbReference>
<dbReference type="Bgee" id="ENSMUSG00000030428">
    <property type="expression patterns" value="Expressed in visual cortex and 199 other cell types or tissues"/>
</dbReference>
<dbReference type="ExpressionAtlas" id="Q9D3A9">
    <property type="expression patterns" value="baseline and differential"/>
</dbReference>
<dbReference type="GO" id="GO:0030424">
    <property type="term" value="C:axon"/>
    <property type="evidence" value="ECO:0000266"/>
    <property type="project" value="MGI"/>
</dbReference>
<dbReference type="GO" id="GO:0034707">
    <property type="term" value="C:chloride channel complex"/>
    <property type="evidence" value="ECO:0007669"/>
    <property type="project" value="UniProtKB-KW"/>
</dbReference>
<dbReference type="GO" id="GO:0031527">
    <property type="term" value="C:filopodium membrane"/>
    <property type="evidence" value="ECO:0000314"/>
    <property type="project" value="MGI"/>
</dbReference>
<dbReference type="GO" id="GO:0032433">
    <property type="term" value="C:filopodium tip"/>
    <property type="evidence" value="ECO:0000314"/>
    <property type="project" value="MGI"/>
</dbReference>
<dbReference type="GO" id="GO:0016020">
    <property type="term" value="C:membrane"/>
    <property type="evidence" value="ECO:0000314"/>
    <property type="project" value="MGI"/>
</dbReference>
<dbReference type="GO" id="GO:0005886">
    <property type="term" value="C:plasma membrane"/>
    <property type="evidence" value="ECO:0000314"/>
    <property type="project" value="UniProtKB"/>
</dbReference>
<dbReference type="GO" id="GO:0030868">
    <property type="term" value="C:smooth endoplasmic reticulum membrane"/>
    <property type="evidence" value="ECO:0000314"/>
    <property type="project" value="MGI"/>
</dbReference>
<dbReference type="GO" id="GO:0045202">
    <property type="term" value="C:synapse"/>
    <property type="evidence" value="ECO:0000314"/>
    <property type="project" value="SynGO"/>
</dbReference>
<dbReference type="GO" id="GO:0005509">
    <property type="term" value="F:calcium ion binding"/>
    <property type="evidence" value="ECO:0000314"/>
    <property type="project" value="MGI"/>
</dbReference>
<dbReference type="GO" id="GO:0072320">
    <property type="term" value="F:volume-sensitive chloride channel activity"/>
    <property type="evidence" value="ECO:0000314"/>
    <property type="project" value="UniProtKB"/>
</dbReference>
<dbReference type="GO" id="GO:0000902">
    <property type="term" value="P:cell morphogenesis"/>
    <property type="evidence" value="ECO:0000315"/>
    <property type="project" value="MGI"/>
</dbReference>
<dbReference type="GO" id="GO:0098609">
    <property type="term" value="P:cell-cell adhesion"/>
    <property type="evidence" value="ECO:0000314"/>
    <property type="project" value="MGI"/>
</dbReference>
<dbReference type="GO" id="GO:0031589">
    <property type="term" value="P:cell-substrate adhesion"/>
    <property type="evidence" value="ECO:0000314"/>
    <property type="project" value="MGI"/>
</dbReference>
<dbReference type="GO" id="GO:0046847">
    <property type="term" value="P:filopodium assembly"/>
    <property type="evidence" value="ECO:0000314"/>
    <property type="project" value="MGI"/>
</dbReference>
<dbReference type="GO" id="GO:0010467">
    <property type="term" value="P:gene expression"/>
    <property type="evidence" value="ECO:0000315"/>
    <property type="project" value="MGI"/>
</dbReference>
<dbReference type="GO" id="GO:0015813">
    <property type="term" value="P:L-glutamate transmembrane transport"/>
    <property type="evidence" value="ECO:0000314"/>
    <property type="project" value="UniProtKB"/>
</dbReference>
<dbReference type="GO" id="GO:0000278">
    <property type="term" value="P:mitotic cell cycle"/>
    <property type="evidence" value="ECO:0000315"/>
    <property type="project" value="MGI"/>
</dbReference>
<dbReference type="GO" id="GO:0022008">
    <property type="term" value="P:neurogenesis"/>
    <property type="evidence" value="ECO:0000315"/>
    <property type="project" value="MGI"/>
</dbReference>
<dbReference type="GO" id="GO:0007219">
    <property type="term" value="P:Notch signaling pathway"/>
    <property type="evidence" value="ECO:0000315"/>
    <property type="project" value="MGI"/>
</dbReference>
<dbReference type="GO" id="GO:0048863">
    <property type="term" value="P:stem cell differentiation"/>
    <property type="evidence" value="ECO:0000315"/>
    <property type="project" value="MGI"/>
</dbReference>
<dbReference type="GO" id="GO:0072089">
    <property type="term" value="P:stem cell proliferation"/>
    <property type="evidence" value="ECO:0000315"/>
    <property type="project" value="MGI"/>
</dbReference>
<dbReference type="CDD" id="cd07912">
    <property type="entry name" value="Tweety_N"/>
    <property type="match status" value="1"/>
</dbReference>
<dbReference type="InterPro" id="IPR006990">
    <property type="entry name" value="Tweety"/>
</dbReference>
<dbReference type="PANTHER" id="PTHR12424:SF5">
    <property type="entry name" value="PROTEIN TWEETY HOMOLOG 1"/>
    <property type="match status" value="1"/>
</dbReference>
<dbReference type="PANTHER" id="PTHR12424">
    <property type="entry name" value="TWEETY-RELATED"/>
    <property type="match status" value="1"/>
</dbReference>
<dbReference type="Pfam" id="PF04906">
    <property type="entry name" value="Tweety"/>
    <property type="match status" value="1"/>
</dbReference>
<evidence type="ECO:0000250" key="1">
    <source>
        <dbReference type="UniProtKB" id="Q9H313"/>
    </source>
</evidence>
<evidence type="ECO:0000255" key="2"/>
<evidence type="ECO:0000256" key="3">
    <source>
        <dbReference type="SAM" id="MobiDB-lite"/>
    </source>
</evidence>
<evidence type="ECO:0000269" key="4">
    <source>
    </source>
</evidence>
<evidence type="ECO:0000269" key="5">
    <source>
    </source>
</evidence>
<evidence type="ECO:0000269" key="6">
    <source>
    </source>
</evidence>
<evidence type="ECO:0000303" key="7">
    <source>
    </source>
</evidence>
<evidence type="ECO:0000303" key="8">
    <source>
    </source>
</evidence>
<evidence type="ECO:0000303" key="9">
    <source>
    </source>
</evidence>
<evidence type="ECO:0000303" key="10">
    <source>
    </source>
</evidence>
<evidence type="ECO:0000305" key="11"/>
<evidence type="ECO:0000305" key="12">
    <source>
    </source>
</evidence>
<evidence type="ECO:0007744" key="13">
    <source>
    </source>
</evidence>
<feature type="chain" id="PRO_0000312241" description="Protein tweety homolog 1">
    <location>
        <begin position="1"/>
        <end position="450"/>
    </location>
</feature>
<feature type="topological domain" description="Extracellular" evidence="1">
    <location>
        <begin position="1"/>
        <end position="43"/>
    </location>
</feature>
<feature type="transmembrane region" description="Helical; Name=1" evidence="2">
    <location>
        <begin position="44"/>
        <end position="64"/>
    </location>
</feature>
<feature type="topological domain" description="Cytoplasmic" evidence="1">
    <location>
        <begin position="65"/>
        <end position="88"/>
    </location>
</feature>
<feature type="transmembrane region" description="Helical; Name=2" evidence="2">
    <location>
        <begin position="89"/>
        <end position="109"/>
    </location>
</feature>
<feature type="topological domain" description="Extracellular" evidence="1">
    <location>
        <begin position="110"/>
        <end position="214"/>
    </location>
</feature>
<feature type="transmembrane region" description="Helical; Name=3" evidence="2">
    <location>
        <begin position="215"/>
        <end position="235"/>
    </location>
</feature>
<feature type="topological domain" description="Cytoplasmic" evidence="1">
    <location>
        <begin position="236"/>
        <end position="240"/>
    </location>
</feature>
<feature type="transmembrane region" description="Helical; Name=4" evidence="2">
    <location>
        <begin position="241"/>
        <end position="261"/>
    </location>
</feature>
<feature type="topological domain" description="Extracellular" evidence="1">
    <location>
        <begin position="262"/>
        <end position="390"/>
    </location>
</feature>
<feature type="transmembrane region" description="Helical; Name=5" evidence="2">
    <location>
        <begin position="391"/>
        <end position="411"/>
    </location>
</feature>
<feature type="topological domain" description="Cytoplasmic" evidence="1">
    <location>
        <begin position="412"/>
        <end position="450"/>
    </location>
</feature>
<feature type="region of interest" description="Disordered" evidence="3">
    <location>
        <begin position="428"/>
        <end position="450"/>
    </location>
</feature>
<feature type="site" description="Essential for the formation of the channel-pore" evidence="5">
    <location>
        <position position="165"/>
    </location>
</feature>
<feature type="modified residue" description="Phosphoserine" evidence="13">
    <location>
        <position position="440"/>
    </location>
</feature>
<feature type="glycosylation site" description="N-linked (GlcNAc...) asparagine" evidence="2">
    <location>
        <position position="130"/>
    </location>
</feature>
<feature type="glycosylation site" description="N-linked (GlcNAc...) asparagine" evidence="2">
    <location>
        <position position="284"/>
    </location>
</feature>
<feature type="glycosylation site" description="N-linked (GlcNAc...) asparagine" evidence="2">
    <location>
        <position position="355"/>
    </location>
</feature>
<feature type="disulfide bond" evidence="1">
    <location>
        <begin position="275"/>
        <end position="385"/>
    </location>
</feature>
<feature type="disulfide bond" evidence="6">
    <location>
        <begin position="303"/>
        <end position="370"/>
    </location>
</feature>
<feature type="splice variant" id="VSP_029762" description="In isoform 5." evidence="9">
    <location>
        <begin position="1"/>
        <end position="96"/>
    </location>
</feature>
<feature type="splice variant" id="VSP_029763" description="In isoform 5." evidence="9">
    <original>ALLVGC</original>
    <variation>MQRSNS</variation>
    <location>
        <begin position="97"/>
        <end position="102"/>
    </location>
</feature>
<feature type="splice variant" id="VSP_029765" description="In isoform 4." evidence="7 8">
    <original>SDDYDDTDDDDPFNPQESKRFVQWQSSI</original>
    <variation>RNPNALCSGSLPSEPPLQSGACLSSMLLSWLLEKAPLT</variation>
    <location>
        <begin position="423"/>
        <end position="450"/>
    </location>
</feature>
<feature type="mutagenesis site" description="Significant decrease in hypo-osmotic solution-induced chloride conductance but no effect on cell membrane localization." evidence="5">
    <original>R</original>
    <variation>A</variation>
    <location>
        <position position="165"/>
    </location>
</feature>
<feature type="sequence conflict" description="In Ref. 1; AAG02615/AAG15842." evidence="11" ref="1">
    <original>L</original>
    <variation>P</variation>
    <location>
        <position position="15"/>
    </location>
</feature>
<feature type="sequence conflict" description="In Ref. 3; BAC31730." evidence="11" ref="3">
    <original>R</original>
    <variation>L</variation>
    <location>
        <position position="21"/>
    </location>
</feature>
<feature type="sequence conflict" description="In Ref. 3; BAB29865." evidence="11" ref="3">
    <original>S</original>
    <variation>T</variation>
    <location>
        <position position="116"/>
    </location>
</feature>
<feature type="sequence conflict" description="In Ref. 3; BAB29865." evidence="11" ref="3">
    <original>V</original>
    <variation>M</variation>
    <location>
        <position position="151"/>
    </location>
</feature>
<feature type="sequence conflict" description="In Ref. 1; AAG02615/AAG15842 and 2; BAD20188." evidence="11" ref="1 2">
    <original>E</original>
    <variation>G</variation>
    <location>
        <position position="288"/>
    </location>
</feature>
<feature type="sequence conflict" description="In Ref. 3; BAB29865." evidence="11" ref="3">
    <original>D</original>
    <variation>Y</variation>
    <location>
        <position position="427"/>
    </location>
</feature>
<keyword id="KW-0025">Alternative splicing</keyword>
<keyword id="KW-0130">Cell adhesion</keyword>
<keyword id="KW-1003">Cell membrane</keyword>
<keyword id="KW-0868">Chloride</keyword>
<keyword id="KW-0869">Chloride channel</keyword>
<keyword id="KW-1015">Disulfide bond</keyword>
<keyword id="KW-0325">Glycoprotein</keyword>
<keyword id="KW-0407">Ion channel</keyword>
<keyword id="KW-0406">Ion transport</keyword>
<keyword id="KW-0472">Membrane</keyword>
<keyword id="KW-0479">Metal-binding</keyword>
<keyword id="KW-0597">Phosphoprotein</keyword>
<keyword id="KW-1185">Reference proteome</keyword>
<keyword id="KW-0812">Transmembrane</keyword>
<keyword id="KW-1133">Transmembrane helix</keyword>
<keyword id="KW-0813">Transport</keyword>
<sequence length="450" mass="49032">MGAPPGYRPSAWVHLLHQLPRADFQLRPVPSGFAPRDQEYQQALLLVAALAGLGLGLSLIFIAVYLIRFCCCRPPEPHGAKSPPPGGGCVTWSCIAALLVGCAGIGIGFYGNSETSDGVSQLSSALLHANHTLSTIDDVVLETVERLGEAVKTELTTLEEVLSVRMELVAATRGARRQAEAAAQYLQGLAFWQGVSLSPVQVAEDVTFVEEYRWLAYVLLLLLVLLVCLFTLLGLAKQSKWLVVVMTAMSLLVLVLSWGSMGLEAATAVGLSDFCSNPDTYVLNLTQEETGLSSDILSYYFLCNQAVSNPFQQRLTLSQRALASIHSQLQGLEREAIPQFSAAQKPLLSLEETLNVTERSFHQLVALLHCRSLHKDYGSALRGLCEDALEGLLFLMLFSLLSAGALATTLCSLPRAWALFPPSDDYDDTDDDDPFNPQESKRFVQWQSSI</sequence>
<name>TTYH1_MOUSE</name>
<gene>
    <name type="primary">Ttyh1</name>
</gene>
<proteinExistence type="evidence at protein level"/>
<protein>
    <recommendedName>
        <fullName>Protein tweety homolog 1</fullName>
        <shortName>mTTY1</shortName>
    </recommendedName>
    <alternativeName>
        <fullName evidence="10">Volume-regulated anion channel subunit Ttyh1</fullName>
    </alternativeName>
</protein>
<accession>Q9D3A9</accession>
<accession>Q6L751</accession>
<accession>Q6P0A7</accession>
<accession>Q8BRL4</accession>
<accession>Q8C7M4</accession>
<accession>Q9D5D1</accession>
<accession>Q9EQN7</accession>
<accession>Q9ESC3</accession>